<evidence type="ECO:0000255" key="1">
    <source>
        <dbReference type="HAMAP-Rule" id="MF_00121"/>
    </source>
</evidence>
<protein>
    <recommendedName>
        <fullName evidence="1">Aspartyl/glutamyl-tRNA(Asn/Gln) amidotransferase subunit B</fullName>
        <shortName evidence="1">Asp/Glu-ADT subunit B</shortName>
        <ecNumber evidence="1">6.3.5.-</ecNumber>
    </recommendedName>
</protein>
<accession>B2ILX7</accession>
<keyword id="KW-0067">ATP-binding</keyword>
<keyword id="KW-0436">Ligase</keyword>
<keyword id="KW-0547">Nucleotide-binding</keyword>
<keyword id="KW-0648">Protein biosynthesis</keyword>
<reference key="1">
    <citation type="journal article" date="2009" name="BMC Genomics">
        <title>Genome evolution driven by host adaptations results in a more virulent and antimicrobial-resistant Streptococcus pneumoniae serotype 14.</title>
        <authorList>
            <person name="Ding F."/>
            <person name="Tang P."/>
            <person name="Hsu M.-H."/>
            <person name="Cui P."/>
            <person name="Hu S."/>
            <person name="Yu J."/>
            <person name="Chiu C.-H."/>
        </authorList>
    </citation>
    <scope>NUCLEOTIDE SEQUENCE [LARGE SCALE GENOMIC DNA]</scope>
    <source>
        <strain>CGSP14</strain>
    </source>
</reference>
<gene>
    <name evidence="1" type="primary">gatB</name>
    <name type="ordered locus">SPCG_0430</name>
</gene>
<name>GATB_STRPS</name>
<dbReference type="EC" id="6.3.5.-" evidence="1"/>
<dbReference type="EMBL" id="CP001033">
    <property type="protein sequence ID" value="ACB89682.1"/>
    <property type="molecule type" value="Genomic_DNA"/>
</dbReference>
<dbReference type="RefSeq" id="WP_001008690.1">
    <property type="nucleotide sequence ID" value="NC_010582.1"/>
</dbReference>
<dbReference type="SMR" id="B2ILX7"/>
<dbReference type="KEGG" id="spw:SPCG_0430"/>
<dbReference type="HOGENOM" id="CLU_019240_0_0_9"/>
<dbReference type="GO" id="GO:0050566">
    <property type="term" value="F:asparaginyl-tRNA synthase (glutamine-hydrolyzing) activity"/>
    <property type="evidence" value="ECO:0007669"/>
    <property type="project" value="RHEA"/>
</dbReference>
<dbReference type="GO" id="GO:0005524">
    <property type="term" value="F:ATP binding"/>
    <property type="evidence" value="ECO:0007669"/>
    <property type="project" value="UniProtKB-KW"/>
</dbReference>
<dbReference type="GO" id="GO:0050567">
    <property type="term" value="F:glutaminyl-tRNA synthase (glutamine-hydrolyzing) activity"/>
    <property type="evidence" value="ECO:0007669"/>
    <property type="project" value="UniProtKB-UniRule"/>
</dbReference>
<dbReference type="GO" id="GO:0070681">
    <property type="term" value="P:glutaminyl-tRNAGln biosynthesis via transamidation"/>
    <property type="evidence" value="ECO:0007669"/>
    <property type="project" value="TreeGrafter"/>
</dbReference>
<dbReference type="GO" id="GO:0006412">
    <property type="term" value="P:translation"/>
    <property type="evidence" value="ECO:0007669"/>
    <property type="project" value="UniProtKB-UniRule"/>
</dbReference>
<dbReference type="FunFam" id="1.10.10.410:FF:000001">
    <property type="entry name" value="Aspartyl/glutamyl-tRNA(Asn/Gln) amidotransferase subunit B"/>
    <property type="match status" value="1"/>
</dbReference>
<dbReference type="FunFam" id="1.10.150.380:FF:000001">
    <property type="entry name" value="Aspartyl/glutamyl-tRNA(Asn/Gln) amidotransferase subunit B"/>
    <property type="match status" value="1"/>
</dbReference>
<dbReference type="Gene3D" id="1.10.10.410">
    <property type="match status" value="1"/>
</dbReference>
<dbReference type="Gene3D" id="1.10.150.380">
    <property type="entry name" value="GatB domain, N-terminal subdomain"/>
    <property type="match status" value="1"/>
</dbReference>
<dbReference type="HAMAP" id="MF_00121">
    <property type="entry name" value="GatB"/>
    <property type="match status" value="1"/>
</dbReference>
<dbReference type="InterPro" id="IPR017959">
    <property type="entry name" value="Asn/Gln-tRNA_amidoTrfase_suB/E"/>
</dbReference>
<dbReference type="InterPro" id="IPR006075">
    <property type="entry name" value="Asn/Gln-tRNA_Trfase_suB/E_cat"/>
</dbReference>
<dbReference type="InterPro" id="IPR018027">
    <property type="entry name" value="Asn/Gln_amidotransferase"/>
</dbReference>
<dbReference type="InterPro" id="IPR003789">
    <property type="entry name" value="Asn/Gln_tRNA_amidoTrase-B-like"/>
</dbReference>
<dbReference type="InterPro" id="IPR004413">
    <property type="entry name" value="GatB"/>
</dbReference>
<dbReference type="InterPro" id="IPR042114">
    <property type="entry name" value="GatB_C_1"/>
</dbReference>
<dbReference type="InterPro" id="IPR023168">
    <property type="entry name" value="GatB_Yqey_C_2"/>
</dbReference>
<dbReference type="InterPro" id="IPR017958">
    <property type="entry name" value="Gln-tRNA_amidoTrfase_suB_CS"/>
</dbReference>
<dbReference type="InterPro" id="IPR014746">
    <property type="entry name" value="Gln_synth/guanido_kin_cat_dom"/>
</dbReference>
<dbReference type="NCBIfam" id="TIGR00133">
    <property type="entry name" value="gatB"/>
    <property type="match status" value="1"/>
</dbReference>
<dbReference type="NCBIfam" id="NF004011">
    <property type="entry name" value="PRK05477.1-1"/>
    <property type="match status" value="1"/>
</dbReference>
<dbReference type="NCBIfam" id="NF004012">
    <property type="entry name" value="PRK05477.1-2"/>
    <property type="match status" value="1"/>
</dbReference>
<dbReference type="NCBIfam" id="NF004014">
    <property type="entry name" value="PRK05477.1-4"/>
    <property type="match status" value="1"/>
</dbReference>
<dbReference type="PANTHER" id="PTHR11659">
    <property type="entry name" value="GLUTAMYL-TRNA GLN AMIDOTRANSFERASE SUBUNIT B MITOCHONDRIAL AND PROKARYOTIC PET112-RELATED"/>
    <property type="match status" value="1"/>
</dbReference>
<dbReference type="PANTHER" id="PTHR11659:SF0">
    <property type="entry name" value="GLUTAMYL-TRNA(GLN) AMIDOTRANSFERASE SUBUNIT B, MITOCHONDRIAL"/>
    <property type="match status" value="1"/>
</dbReference>
<dbReference type="Pfam" id="PF02934">
    <property type="entry name" value="GatB_N"/>
    <property type="match status" value="1"/>
</dbReference>
<dbReference type="Pfam" id="PF02637">
    <property type="entry name" value="GatB_Yqey"/>
    <property type="match status" value="1"/>
</dbReference>
<dbReference type="SMART" id="SM00845">
    <property type="entry name" value="GatB_Yqey"/>
    <property type="match status" value="1"/>
</dbReference>
<dbReference type="SUPFAM" id="SSF89095">
    <property type="entry name" value="GatB/YqeY motif"/>
    <property type="match status" value="1"/>
</dbReference>
<dbReference type="SUPFAM" id="SSF55931">
    <property type="entry name" value="Glutamine synthetase/guanido kinase"/>
    <property type="match status" value="1"/>
</dbReference>
<dbReference type="PROSITE" id="PS01234">
    <property type="entry name" value="GATB"/>
    <property type="match status" value="1"/>
</dbReference>
<comment type="function">
    <text evidence="1">Allows the formation of correctly charged Asn-tRNA(Asn) or Gln-tRNA(Gln) through the transamidation of misacylated Asp-tRNA(Asn) or Glu-tRNA(Gln) in organisms which lack either or both of asparaginyl-tRNA or glutaminyl-tRNA synthetases. The reaction takes place in the presence of glutamine and ATP through an activated phospho-Asp-tRNA(Asn) or phospho-Glu-tRNA(Gln).</text>
</comment>
<comment type="catalytic activity">
    <reaction evidence="1">
        <text>L-glutamyl-tRNA(Gln) + L-glutamine + ATP + H2O = L-glutaminyl-tRNA(Gln) + L-glutamate + ADP + phosphate + H(+)</text>
        <dbReference type="Rhea" id="RHEA:17521"/>
        <dbReference type="Rhea" id="RHEA-COMP:9681"/>
        <dbReference type="Rhea" id="RHEA-COMP:9684"/>
        <dbReference type="ChEBI" id="CHEBI:15377"/>
        <dbReference type="ChEBI" id="CHEBI:15378"/>
        <dbReference type="ChEBI" id="CHEBI:29985"/>
        <dbReference type="ChEBI" id="CHEBI:30616"/>
        <dbReference type="ChEBI" id="CHEBI:43474"/>
        <dbReference type="ChEBI" id="CHEBI:58359"/>
        <dbReference type="ChEBI" id="CHEBI:78520"/>
        <dbReference type="ChEBI" id="CHEBI:78521"/>
        <dbReference type="ChEBI" id="CHEBI:456216"/>
    </reaction>
</comment>
<comment type="catalytic activity">
    <reaction evidence="1">
        <text>L-aspartyl-tRNA(Asn) + L-glutamine + ATP + H2O = L-asparaginyl-tRNA(Asn) + L-glutamate + ADP + phosphate + 2 H(+)</text>
        <dbReference type="Rhea" id="RHEA:14513"/>
        <dbReference type="Rhea" id="RHEA-COMP:9674"/>
        <dbReference type="Rhea" id="RHEA-COMP:9677"/>
        <dbReference type="ChEBI" id="CHEBI:15377"/>
        <dbReference type="ChEBI" id="CHEBI:15378"/>
        <dbReference type="ChEBI" id="CHEBI:29985"/>
        <dbReference type="ChEBI" id="CHEBI:30616"/>
        <dbReference type="ChEBI" id="CHEBI:43474"/>
        <dbReference type="ChEBI" id="CHEBI:58359"/>
        <dbReference type="ChEBI" id="CHEBI:78515"/>
        <dbReference type="ChEBI" id="CHEBI:78516"/>
        <dbReference type="ChEBI" id="CHEBI:456216"/>
    </reaction>
</comment>
<comment type="subunit">
    <text evidence="1">Heterotrimer of A, B and C subunits.</text>
</comment>
<comment type="similarity">
    <text evidence="1">Belongs to the GatB/GatE family. GatB subfamily.</text>
</comment>
<proteinExistence type="inferred from homology"/>
<sequence length="480" mass="53689">MNFETVIGLEVHVELNTNSKIFSPTSAHFGNDQNANTNVIDWSFPGVLPVLNKGVVDAGIKAALALNMDLHKKMHFDRKNYFYPDNPKAYQISQFDEPIGYNGWIEVELEDGTTKKIGIERAHLEEDAGKNTHGTDGYSYVDLNRQGVPLIEIVSEADMRSPEEAYAYLTALKEVIQYAGISDVKMEEGSMRVDANISLRPYGQEKFGTKTELKNLNSFSNVRKGLEYEVQRQAEILRSGGQIRQETRRYDEANKTTILMRVKEGAADYRYFPEPDLPLFEISDEWIEEMRTELPEFPKERRARYVSDLGLSDYDASQLTANKVTSDFFEKAVALGGDAKQVSNWLQGEVAQFLNAEGKTLEQIELTPENLVEMIAIIEDGTISSKIAKKVFVHLAKNGGGAREYVEKAGMVQISDPAILIPIIHQVFADNEAAVADFKSGKRNADKAFTGFLMKATKGQANPQVALKLLAQELAKLKEN</sequence>
<feature type="chain" id="PRO_1000095246" description="Aspartyl/glutamyl-tRNA(Asn/Gln) amidotransferase subunit B">
    <location>
        <begin position="1"/>
        <end position="480"/>
    </location>
</feature>
<organism>
    <name type="scientific">Streptococcus pneumoniae (strain CGSP14)</name>
    <dbReference type="NCBI Taxonomy" id="516950"/>
    <lineage>
        <taxon>Bacteria</taxon>
        <taxon>Bacillati</taxon>
        <taxon>Bacillota</taxon>
        <taxon>Bacilli</taxon>
        <taxon>Lactobacillales</taxon>
        <taxon>Streptococcaceae</taxon>
        <taxon>Streptococcus</taxon>
    </lineage>
</organism>